<name>RS17_ALIF1</name>
<organism>
    <name type="scientific">Aliivibrio fischeri (strain ATCC 700601 / ES114)</name>
    <name type="common">Vibrio fischeri</name>
    <dbReference type="NCBI Taxonomy" id="312309"/>
    <lineage>
        <taxon>Bacteria</taxon>
        <taxon>Pseudomonadati</taxon>
        <taxon>Pseudomonadota</taxon>
        <taxon>Gammaproteobacteria</taxon>
        <taxon>Vibrionales</taxon>
        <taxon>Vibrionaceae</taxon>
        <taxon>Aliivibrio</taxon>
    </lineage>
</organism>
<comment type="function">
    <text evidence="1">One of the primary rRNA binding proteins, it binds specifically to the 5'-end of 16S ribosomal RNA.</text>
</comment>
<comment type="subunit">
    <text evidence="1">Part of the 30S ribosomal subunit.</text>
</comment>
<comment type="similarity">
    <text evidence="1">Belongs to the universal ribosomal protein uS17 family.</text>
</comment>
<sequence>MSEKIRTMQGRVISDKMDKSIVVAIERMVKHPIYGKYIKRTTKLHAHDENNECGLGDTVEIRECRPLSKTKSWTLVNIVEKAKA</sequence>
<keyword id="KW-1185">Reference proteome</keyword>
<keyword id="KW-0687">Ribonucleoprotein</keyword>
<keyword id="KW-0689">Ribosomal protein</keyword>
<keyword id="KW-0694">RNA-binding</keyword>
<keyword id="KW-0699">rRNA-binding</keyword>
<proteinExistence type="inferred from homology"/>
<dbReference type="EMBL" id="CP000020">
    <property type="protein sequence ID" value="AAW84740.1"/>
    <property type="molecule type" value="Genomic_DNA"/>
</dbReference>
<dbReference type="RefSeq" id="WP_005417239.1">
    <property type="nucleotide sequence ID" value="NZ_CAWLES010000001.1"/>
</dbReference>
<dbReference type="RefSeq" id="YP_203628.1">
    <property type="nucleotide sequence ID" value="NC_006840.2"/>
</dbReference>
<dbReference type="SMR" id="Q5E8A6"/>
<dbReference type="STRING" id="312309.VF_0245"/>
<dbReference type="EnsemblBacteria" id="AAW84740">
    <property type="protein sequence ID" value="AAW84740"/>
    <property type="gene ID" value="VF_0245"/>
</dbReference>
<dbReference type="GeneID" id="54162867"/>
<dbReference type="KEGG" id="vfi:VF_0245"/>
<dbReference type="PATRIC" id="fig|312309.11.peg.241"/>
<dbReference type="eggNOG" id="COG0186">
    <property type="taxonomic scope" value="Bacteria"/>
</dbReference>
<dbReference type="HOGENOM" id="CLU_073626_1_1_6"/>
<dbReference type="OrthoDB" id="9811714at2"/>
<dbReference type="Proteomes" id="UP000000537">
    <property type="component" value="Chromosome I"/>
</dbReference>
<dbReference type="GO" id="GO:0022627">
    <property type="term" value="C:cytosolic small ribosomal subunit"/>
    <property type="evidence" value="ECO:0007669"/>
    <property type="project" value="TreeGrafter"/>
</dbReference>
<dbReference type="GO" id="GO:0019843">
    <property type="term" value="F:rRNA binding"/>
    <property type="evidence" value="ECO:0007669"/>
    <property type="project" value="UniProtKB-UniRule"/>
</dbReference>
<dbReference type="GO" id="GO:0003735">
    <property type="term" value="F:structural constituent of ribosome"/>
    <property type="evidence" value="ECO:0007669"/>
    <property type="project" value="InterPro"/>
</dbReference>
<dbReference type="GO" id="GO:0006412">
    <property type="term" value="P:translation"/>
    <property type="evidence" value="ECO:0007669"/>
    <property type="project" value="UniProtKB-UniRule"/>
</dbReference>
<dbReference type="CDD" id="cd00364">
    <property type="entry name" value="Ribosomal_uS17"/>
    <property type="match status" value="1"/>
</dbReference>
<dbReference type="FunFam" id="2.40.50.140:FF:000014">
    <property type="entry name" value="30S ribosomal protein S17"/>
    <property type="match status" value="1"/>
</dbReference>
<dbReference type="Gene3D" id="2.40.50.140">
    <property type="entry name" value="Nucleic acid-binding proteins"/>
    <property type="match status" value="1"/>
</dbReference>
<dbReference type="HAMAP" id="MF_01345_B">
    <property type="entry name" value="Ribosomal_uS17_B"/>
    <property type="match status" value="1"/>
</dbReference>
<dbReference type="InterPro" id="IPR012340">
    <property type="entry name" value="NA-bd_OB-fold"/>
</dbReference>
<dbReference type="InterPro" id="IPR000266">
    <property type="entry name" value="Ribosomal_uS17"/>
</dbReference>
<dbReference type="InterPro" id="IPR019984">
    <property type="entry name" value="Ribosomal_uS17_bact/chlr"/>
</dbReference>
<dbReference type="InterPro" id="IPR019979">
    <property type="entry name" value="Ribosomal_uS17_CS"/>
</dbReference>
<dbReference type="NCBIfam" id="NF004123">
    <property type="entry name" value="PRK05610.1"/>
    <property type="match status" value="1"/>
</dbReference>
<dbReference type="NCBIfam" id="TIGR03635">
    <property type="entry name" value="uS17_bact"/>
    <property type="match status" value="1"/>
</dbReference>
<dbReference type="PANTHER" id="PTHR10744">
    <property type="entry name" value="40S RIBOSOMAL PROTEIN S11 FAMILY MEMBER"/>
    <property type="match status" value="1"/>
</dbReference>
<dbReference type="PANTHER" id="PTHR10744:SF1">
    <property type="entry name" value="SMALL RIBOSOMAL SUBUNIT PROTEIN US17M"/>
    <property type="match status" value="1"/>
</dbReference>
<dbReference type="Pfam" id="PF00366">
    <property type="entry name" value="Ribosomal_S17"/>
    <property type="match status" value="1"/>
</dbReference>
<dbReference type="PRINTS" id="PR00973">
    <property type="entry name" value="RIBOSOMALS17"/>
</dbReference>
<dbReference type="SUPFAM" id="SSF50249">
    <property type="entry name" value="Nucleic acid-binding proteins"/>
    <property type="match status" value="1"/>
</dbReference>
<dbReference type="PROSITE" id="PS00056">
    <property type="entry name" value="RIBOSOMAL_S17"/>
    <property type="match status" value="1"/>
</dbReference>
<feature type="chain" id="PRO_0000233604" description="Small ribosomal subunit protein uS17">
    <location>
        <begin position="1"/>
        <end position="84"/>
    </location>
</feature>
<evidence type="ECO:0000255" key="1">
    <source>
        <dbReference type="HAMAP-Rule" id="MF_01345"/>
    </source>
</evidence>
<evidence type="ECO:0000305" key="2"/>
<protein>
    <recommendedName>
        <fullName evidence="1">Small ribosomal subunit protein uS17</fullName>
    </recommendedName>
    <alternativeName>
        <fullName evidence="2">30S ribosomal protein S17</fullName>
    </alternativeName>
</protein>
<gene>
    <name evidence="1" type="primary">rpsQ</name>
    <name type="ordered locus">VF_0245</name>
</gene>
<reference key="1">
    <citation type="journal article" date="2005" name="Proc. Natl. Acad. Sci. U.S.A.">
        <title>Complete genome sequence of Vibrio fischeri: a symbiotic bacterium with pathogenic congeners.</title>
        <authorList>
            <person name="Ruby E.G."/>
            <person name="Urbanowski M."/>
            <person name="Campbell J."/>
            <person name="Dunn A."/>
            <person name="Faini M."/>
            <person name="Gunsalus R."/>
            <person name="Lostroh P."/>
            <person name="Lupp C."/>
            <person name="McCann J."/>
            <person name="Millikan D."/>
            <person name="Schaefer A."/>
            <person name="Stabb E."/>
            <person name="Stevens A."/>
            <person name="Visick K."/>
            <person name="Whistler C."/>
            <person name="Greenberg E.P."/>
        </authorList>
    </citation>
    <scope>NUCLEOTIDE SEQUENCE [LARGE SCALE GENOMIC DNA]</scope>
    <source>
        <strain>ATCC 700601 / ES114</strain>
    </source>
</reference>
<accession>Q5E8A6</accession>